<keyword id="KW-0150">Chloroplast</keyword>
<keyword id="KW-0472">Membrane</keyword>
<keyword id="KW-0520">NAD</keyword>
<keyword id="KW-0521">NADP</keyword>
<keyword id="KW-0934">Plastid</keyword>
<keyword id="KW-0618">Plastoquinone</keyword>
<keyword id="KW-0874">Quinone</keyword>
<keyword id="KW-0793">Thylakoid</keyword>
<keyword id="KW-1278">Translocase</keyword>
<keyword id="KW-0813">Transport</keyword>
<comment type="function">
    <text evidence="1">NDH shuttles electrons from NAD(P)H:plastoquinone, via FMN and iron-sulfur (Fe-S) centers, to quinones in the photosynthetic chain and possibly in a chloroplast respiratory chain. The immediate electron acceptor for the enzyme in this species is believed to be plastoquinone. Couples the redox reaction to proton translocation, and thus conserves the redox energy in a proton gradient.</text>
</comment>
<comment type="catalytic activity">
    <reaction evidence="1">
        <text>a plastoquinone + NADH + (n+1) H(+)(in) = a plastoquinol + NAD(+) + n H(+)(out)</text>
        <dbReference type="Rhea" id="RHEA:42608"/>
        <dbReference type="Rhea" id="RHEA-COMP:9561"/>
        <dbReference type="Rhea" id="RHEA-COMP:9562"/>
        <dbReference type="ChEBI" id="CHEBI:15378"/>
        <dbReference type="ChEBI" id="CHEBI:17757"/>
        <dbReference type="ChEBI" id="CHEBI:57540"/>
        <dbReference type="ChEBI" id="CHEBI:57945"/>
        <dbReference type="ChEBI" id="CHEBI:62192"/>
    </reaction>
</comment>
<comment type="catalytic activity">
    <reaction evidence="1">
        <text>a plastoquinone + NADPH + (n+1) H(+)(in) = a plastoquinol + NADP(+) + n H(+)(out)</text>
        <dbReference type="Rhea" id="RHEA:42612"/>
        <dbReference type="Rhea" id="RHEA-COMP:9561"/>
        <dbReference type="Rhea" id="RHEA-COMP:9562"/>
        <dbReference type="ChEBI" id="CHEBI:15378"/>
        <dbReference type="ChEBI" id="CHEBI:17757"/>
        <dbReference type="ChEBI" id="CHEBI:57783"/>
        <dbReference type="ChEBI" id="CHEBI:58349"/>
        <dbReference type="ChEBI" id="CHEBI:62192"/>
    </reaction>
</comment>
<comment type="subunit">
    <text evidence="1">NDH is composed of at least 16 different subunits, 5 of which are encoded in the nucleus.</text>
</comment>
<comment type="subcellular location">
    <subcellularLocation>
        <location evidence="1">Plastid</location>
        <location evidence="1">Chloroplast thylakoid membrane</location>
        <topology evidence="1">Peripheral membrane protein</topology>
        <orientation evidence="1">Stromal side</orientation>
    </subcellularLocation>
</comment>
<comment type="similarity">
    <text evidence="1">Belongs to the complex I 30 kDa subunit family.</text>
</comment>
<sequence length="158" mass="18520">MQGNLSAWLVKHALIHRSLGFDYQGIETLQIKPGDWHSIAVILYVYGYNYLRSQCAYDVAPGGLLASVYHLTRIEYGVDQPEEVCIKVFAPRRDPRIPSVFWVWKSVDFQERESYDMLGISYDNHPRLKRILMPESWIGWPLRKDYIAPNFYEIQDAH</sequence>
<name>NDHJ_GUIAB</name>
<organism>
    <name type="scientific">Guizotia abyssinica</name>
    <name type="common">Niger</name>
    <name type="synonym">Ramtilla</name>
    <dbReference type="NCBI Taxonomy" id="4230"/>
    <lineage>
        <taxon>Eukaryota</taxon>
        <taxon>Viridiplantae</taxon>
        <taxon>Streptophyta</taxon>
        <taxon>Embryophyta</taxon>
        <taxon>Tracheophyta</taxon>
        <taxon>Spermatophyta</taxon>
        <taxon>Magnoliopsida</taxon>
        <taxon>eudicotyledons</taxon>
        <taxon>Gunneridae</taxon>
        <taxon>Pentapetalae</taxon>
        <taxon>asterids</taxon>
        <taxon>campanulids</taxon>
        <taxon>Asterales</taxon>
        <taxon>Asteraceae</taxon>
        <taxon>Asteroideae</taxon>
        <taxon>Heliantheae alliance</taxon>
        <taxon>Millerieae</taxon>
        <taxon>Guizotia</taxon>
    </lineage>
</organism>
<accession>B2LMJ6</accession>
<evidence type="ECO:0000255" key="1">
    <source>
        <dbReference type="HAMAP-Rule" id="MF_01357"/>
    </source>
</evidence>
<gene>
    <name evidence="1" type="primary">ndhJ</name>
    <name type="ordered locus">GuabCp024</name>
</gene>
<feature type="chain" id="PRO_0000358269" description="NAD(P)H-quinone oxidoreductase subunit J, chloroplastic">
    <location>
        <begin position="1"/>
        <end position="158"/>
    </location>
</feature>
<dbReference type="EC" id="7.1.1.-" evidence="1"/>
<dbReference type="EMBL" id="EU549769">
    <property type="protein sequence ID" value="ACB86530.1"/>
    <property type="molecule type" value="Genomic_DNA"/>
</dbReference>
<dbReference type="RefSeq" id="YP_001837363.1">
    <property type="nucleotide sequence ID" value="NC_010601.1"/>
</dbReference>
<dbReference type="SMR" id="B2LMJ6"/>
<dbReference type="GeneID" id="6219188"/>
<dbReference type="GO" id="GO:0009535">
    <property type="term" value="C:chloroplast thylakoid membrane"/>
    <property type="evidence" value="ECO:0007669"/>
    <property type="project" value="UniProtKB-SubCell"/>
</dbReference>
<dbReference type="GO" id="GO:0008137">
    <property type="term" value="F:NADH dehydrogenase (ubiquinone) activity"/>
    <property type="evidence" value="ECO:0007669"/>
    <property type="project" value="InterPro"/>
</dbReference>
<dbReference type="GO" id="GO:0048038">
    <property type="term" value="F:quinone binding"/>
    <property type="evidence" value="ECO:0007669"/>
    <property type="project" value="UniProtKB-KW"/>
</dbReference>
<dbReference type="GO" id="GO:0019684">
    <property type="term" value="P:photosynthesis, light reaction"/>
    <property type="evidence" value="ECO:0007669"/>
    <property type="project" value="UniProtKB-UniRule"/>
</dbReference>
<dbReference type="FunFam" id="3.30.460.80:FF:000004">
    <property type="entry name" value="NAD(P)H-quinone oxidoreductase subunit J, chloroplastic"/>
    <property type="match status" value="1"/>
</dbReference>
<dbReference type="Gene3D" id="3.30.460.80">
    <property type="entry name" value="NADH:ubiquinone oxidoreductase, 30kDa subunit"/>
    <property type="match status" value="1"/>
</dbReference>
<dbReference type="HAMAP" id="MF_01357">
    <property type="entry name" value="NDH1_NuoC"/>
    <property type="match status" value="1"/>
</dbReference>
<dbReference type="InterPro" id="IPR010218">
    <property type="entry name" value="NADH_DH_suC"/>
</dbReference>
<dbReference type="InterPro" id="IPR037232">
    <property type="entry name" value="NADH_quin_OxRdtase_su_C/D-like"/>
</dbReference>
<dbReference type="InterPro" id="IPR001268">
    <property type="entry name" value="NADH_UbQ_OxRdtase_30kDa_su"/>
</dbReference>
<dbReference type="InterPro" id="IPR020396">
    <property type="entry name" value="NADH_UbQ_OxRdtase_CS"/>
</dbReference>
<dbReference type="NCBIfam" id="NF009141">
    <property type="entry name" value="PRK12494.1"/>
    <property type="match status" value="1"/>
</dbReference>
<dbReference type="PANTHER" id="PTHR10884:SF14">
    <property type="entry name" value="NADH DEHYDROGENASE [UBIQUINONE] IRON-SULFUR PROTEIN 3, MITOCHONDRIAL"/>
    <property type="match status" value="1"/>
</dbReference>
<dbReference type="PANTHER" id="PTHR10884">
    <property type="entry name" value="NADH DEHYDROGENASE UBIQUINONE IRON-SULFUR PROTEIN 3"/>
    <property type="match status" value="1"/>
</dbReference>
<dbReference type="Pfam" id="PF00329">
    <property type="entry name" value="Complex1_30kDa"/>
    <property type="match status" value="1"/>
</dbReference>
<dbReference type="SUPFAM" id="SSF143243">
    <property type="entry name" value="Nqo5-like"/>
    <property type="match status" value="1"/>
</dbReference>
<dbReference type="PROSITE" id="PS00542">
    <property type="entry name" value="COMPLEX1_30K"/>
    <property type="match status" value="1"/>
</dbReference>
<proteinExistence type="inferred from homology"/>
<protein>
    <recommendedName>
        <fullName evidence="1">NAD(P)H-quinone oxidoreductase subunit J, chloroplastic</fullName>
        <ecNumber evidence="1">7.1.1.-</ecNumber>
    </recommendedName>
    <alternativeName>
        <fullName>NAD(P)H dehydrogenase subunit J</fullName>
    </alternativeName>
    <alternativeName>
        <fullName evidence="1">NADH-plastoquinone oxidoreductase subunit J</fullName>
    </alternativeName>
</protein>
<reference key="1">
    <citation type="submission" date="2008-03" db="EMBL/GenBank/DDBJ databases">
        <title>Guizotia abyssinica chloroplast sequenced using Solexa.</title>
        <authorList>
            <person name="Kane N.C."/>
            <person name="Dempewolf H."/>
            <person name="Stewart M.L."/>
            <person name="Cronk Q."/>
            <person name="Rieseberrg L.H."/>
        </authorList>
    </citation>
    <scope>NUCLEOTIDE SEQUENCE [LARGE SCALE GENOMIC DNA]</scope>
    <source>
        <strain>cv. PI 508077</strain>
    </source>
</reference>
<geneLocation type="chloroplast"/>